<proteinExistence type="predicted"/>
<protein>
    <recommendedName>
        <fullName>Tail completion protein S</fullName>
    </recommendedName>
    <alternativeName>
        <fullName>GpS</fullName>
    </alternativeName>
</protein>
<reference key="1">
    <citation type="journal article" date="1994" name="Virology">
        <title>Molecular cloning and characterization of bacteriophage P2 genes R and S involved in tail completion.</title>
        <authorList>
            <person name="Linderoth N.A."/>
            <person name="Julien B."/>
            <person name="Flick K.E."/>
            <person name="Calendar R."/>
            <person name="Christie G.E."/>
        </authorList>
    </citation>
    <scope>NUCLEOTIDE SEQUENCE [GENOMIC DNA]</scope>
</reference>
<organismHost>
    <name type="scientific">Enterobacteriaceae</name>
    <dbReference type="NCBI Taxonomy" id="543"/>
</organismHost>
<organism>
    <name type="scientific">Escherichia phage P2</name>
    <name type="common">Bacteriophage P2</name>
    <dbReference type="NCBI Taxonomy" id="2905681"/>
    <lineage>
        <taxon>Viruses</taxon>
        <taxon>Duplodnaviria</taxon>
        <taxon>Heunggongvirae</taxon>
        <taxon>Uroviricota</taxon>
        <taxon>Caudoviricetes</taxon>
        <taxon>Peduoviridae</taxon>
        <taxon>Peduovirus</taxon>
        <taxon>Peduovirus P2</taxon>
    </lineage>
</organism>
<dbReference type="EMBL" id="AF063097">
    <property type="protein sequence ID" value="AAD03280.1"/>
    <property type="molecule type" value="Genomic_DNA"/>
</dbReference>
<dbReference type="RefSeq" id="NP_046769.1">
    <property type="nucleotide sequence ID" value="NC_001895.1"/>
</dbReference>
<dbReference type="GeneID" id="77440801"/>
<dbReference type="KEGG" id="vg:77440801"/>
<dbReference type="Proteomes" id="UP000009092">
    <property type="component" value="Genome"/>
</dbReference>
<dbReference type="InterPro" id="IPR006522">
    <property type="entry name" value="Phage_virion_morphogenesis"/>
</dbReference>
<dbReference type="NCBIfam" id="TIGR01635">
    <property type="entry name" value="tail_comp_S"/>
    <property type="match status" value="1"/>
</dbReference>
<dbReference type="Pfam" id="PF05069">
    <property type="entry name" value="Phage_tail_S"/>
    <property type="match status" value="1"/>
</dbReference>
<accession>P36934</accession>
<keyword id="KW-1185">Reference proteome</keyword>
<gene>
    <name type="primary">S</name>
</gene>
<evidence type="ECO:0000256" key="1">
    <source>
        <dbReference type="SAM" id="MobiDB-lite"/>
    </source>
</evidence>
<comment type="function">
    <text>It is proposed that R and S are tail completion proteins that are essential for stable head joining.</text>
</comment>
<name>VPS_BPP2</name>
<sequence length="150" mass="17269">MNEFKRFEDRLTGLIESLSPSGRRRLSAELAKRLRQSQQRRVMAQKAPDGTPYAPRQQQSVRKKTGRVKRKMFAKLITSRFLHIRASPEQASMEFYGGKSPKIASVHQFGLSEENRKDGKKIDYPARPLLGFTGEDVQMIEEIILAHLER</sequence>
<feature type="chain" id="PRO_0000165262" description="Tail completion protein S">
    <location>
        <begin position="1"/>
        <end position="150"/>
    </location>
</feature>
<feature type="region of interest" description="Disordered" evidence="1">
    <location>
        <begin position="32"/>
        <end position="66"/>
    </location>
</feature>